<gene>
    <name type="ordered locus">MGAS9429_Spy0529</name>
</gene>
<reference key="1">
    <citation type="journal article" date="2006" name="Proc. Natl. Acad. Sci. U.S.A.">
        <title>Molecular genetic anatomy of inter- and intraserotype variation in the human bacterial pathogen group A Streptococcus.</title>
        <authorList>
            <person name="Beres S.B."/>
            <person name="Richter E.W."/>
            <person name="Nagiec M.J."/>
            <person name="Sumby P."/>
            <person name="Porcella S.F."/>
            <person name="DeLeo F.R."/>
            <person name="Musser J.M."/>
        </authorList>
    </citation>
    <scope>NUCLEOTIDE SEQUENCE [LARGE SCALE GENOMIC DNA]</scope>
    <source>
        <strain>MGAS9429</strain>
    </source>
</reference>
<feature type="chain" id="PRO_0000259009" description="Nucleotide-binding protein MGAS9429_Spy0529">
    <location>
        <begin position="1"/>
        <end position="296"/>
    </location>
</feature>
<feature type="binding site" evidence="1">
    <location>
        <begin position="13"/>
        <end position="20"/>
    </location>
    <ligand>
        <name>ATP</name>
        <dbReference type="ChEBI" id="CHEBI:30616"/>
    </ligand>
</feature>
<feature type="binding site" evidence="1">
    <location>
        <begin position="63"/>
        <end position="66"/>
    </location>
    <ligand>
        <name>GTP</name>
        <dbReference type="ChEBI" id="CHEBI:37565"/>
    </ligand>
</feature>
<comment type="function">
    <text evidence="1">Displays ATPase and GTPase activities.</text>
</comment>
<comment type="similarity">
    <text evidence="1">Belongs to the RapZ-like family.</text>
</comment>
<protein>
    <recommendedName>
        <fullName evidence="1">Nucleotide-binding protein MGAS9429_Spy0529</fullName>
    </recommendedName>
</protein>
<dbReference type="EMBL" id="CP000259">
    <property type="protein sequence ID" value="ABF31717.1"/>
    <property type="molecule type" value="Genomic_DNA"/>
</dbReference>
<dbReference type="SMR" id="Q1JMN2"/>
<dbReference type="KEGG" id="spk:MGAS9429_Spy0529"/>
<dbReference type="HOGENOM" id="CLU_059558_0_0_9"/>
<dbReference type="Proteomes" id="UP000002433">
    <property type="component" value="Chromosome"/>
</dbReference>
<dbReference type="GO" id="GO:0005524">
    <property type="term" value="F:ATP binding"/>
    <property type="evidence" value="ECO:0007669"/>
    <property type="project" value="UniProtKB-UniRule"/>
</dbReference>
<dbReference type="GO" id="GO:0005525">
    <property type="term" value="F:GTP binding"/>
    <property type="evidence" value="ECO:0007669"/>
    <property type="project" value="UniProtKB-UniRule"/>
</dbReference>
<dbReference type="Gene3D" id="3.40.50.300">
    <property type="entry name" value="P-loop containing nucleotide triphosphate hydrolases"/>
    <property type="match status" value="1"/>
</dbReference>
<dbReference type="HAMAP" id="MF_00636">
    <property type="entry name" value="RapZ_like"/>
    <property type="match status" value="1"/>
</dbReference>
<dbReference type="InterPro" id="IPR027417">
    <property type="entry name" value="P-loop_NTPase"/>
</dbReference>
<dbReference type="InterPro" id="IPR005337">
    <property type="entry name" value="RapZ-like"/>
</dbReference>
<dbReference type="InterPro" id="IPR053930">
    <property type="entry name" value="RapZ-like_N"/>
</dbReference>
<dbReference type="InterPro" id="IPR053931">
    <property type="entry name" value="RapZ_C"/>
</dbReference>
<dbReference type="NCBIfam" id="NF003828">
    <property type="entry name" value="PRK05416.1"/>
    <property type="match status" value="1"/>
</dbReference>
<dbReference type="PANTHER" id="PTHR30448">
    <property type="entry name" value="RNASE ADAPTER PROTEIN RAPZ"/>
    <property type="match status" value="1"/>
</dbReference>
<dbReference type="PANTHER" id="PTHR30448:SF0">
    <property type="entry name" value="RNASE ADAPTER PROTEIN RAPZ"/>
    <property type="match status" value="1"/>
</dbReference>
<dbReference type="Pfam" id="PF22740">
    <property type="entry name" value="PapZ_C"/>
    <property type="match status" value="1"/>
</dbReference>
<dbReference type="Pfam" id="PF03668">
    <property type="entry name" value="RapZ-like_N"/>
    <property type="match status" value="1"/>
</dbReference>
<dbReference type="PIRSF" id="PIRSF005052">
    <property type="entry name" value="P-loopkin"/>
    <property type="match status" value="1"/>
</dbReference>
<dbReference type="SUPFAM" id="SSF52540">
    <property type="entry name" value="P-loop containing nucleoside triphosphate hydrolases"/>
    <property type="match status" value="1"/>
</dbReference>
<organism>
    <name type="scientific">Streptococcus pyogenes serotype M12 (strain MGAS9429)</name>
    <dbReference type="NCBI Taxonomy" id="370551"/>
    <lineage>
        <taxon>Bacteria</taxon>
        <taxon>Bacillati</taxon>
        <taxon>Bacillota</taxon>
        <taxon>Bacilli</taxon>
        <taxon>Lactobacillales</taxon>
        <taxon>Streptococcaceae</taxon>
        <taxon>Streptococcus</taxon>
    </lineage>
</organism>
<name>Y529_STRPC</name>
<sequence>MSDKHINLVIVTGMSGAGKTVAIQSFEDLGYFTIDNMPPALVPKFLELIEQTNENRRVALVVDMRSRLFFKEINSTLDSIESNPSIDFRILFLDATDGELVSRYKETRRSHPLAADGRVLDGIRLERELLSPLKSMSQHVVDTTKLTPRQLRKTISDQFSEGSNQPSFRIEVMSFGFKYGLPLDADLVFDVRFLPNPYYQVELREKTGLDEDVFNYVMSHPESEVFYKHLLNLIVPILPAYQKEGKSVLTVAIGCTGGQHRSVAFAHCLAESLATDWSVNESHRDQNRRKETVNRS</sequence>
<accession>Q1JMN2</accession>
<keyword id="KW-0067">ATP-binding</keyword>
<keyword id="KW-0342">GTP-binding</keyword>
<keyword id="KW-0547">Nucleotide-binding</keyword>
<evidence type="ECO:0000255" key="1">
    <source>
        <dbReference type="HAMAP-Rule" id="MF_00636"/>
    </source>
</evidence>
<proteinExistence type="inferred from homology"/>